<feature type="initiator methionine" description="Removed" evidence="4">
    <location>
        <position position="1"/>
    </location>
</feature>
<feature type="chain" id="PRO_0000122627" description="Sarcosine oxidase subunit alpha">
    <location>
        <begin position="2"/>
        <end position="967"/>
    </location>
</feature>
<feature type="binding site" evidence="1">
    <location>
        <position position="141"/>
    </location>
    <ligand>
        <name>NAD(+)</name>
        <dbReference type="ChEBI" id="CHEBI:57540"/>
    </ligand>
</feature>
<feature type="binding site" evidence="1">
    <location>
        <position position="160"/>
    </location>
    <ligand>
        <name>NAD(+)</name>
        <dbReference type="ChEBI" id="CHEBI:57540"/>
    </ligand>
</feature>
<feature type="binding site" evidence="1">
    <location>
        <position position="161"/>
    </location>
    <ligand>
        <name>NAD(+)</name>
        <dbReference type="ChEBI" id="CHEBI:57540"/>
    </ligand>
</feature>
<feature type="binding site" evidence="1">
    <location>
        <position position="162"/>
    </location>
    <ligand>
        <name>NAD(+)</name>
        <dbReference type="ChEBI" id="CHEBI:57540"/>
    </ligand>
</feature>
<feature type="binding site" evidence="1">
    <location>
        <position position="168"/>
    </location>
    <ligand>
        <name>NAD(+)</name>
        <dbReference type="ChEBI" id="CHEBI:57540"/>
    </ligand>
</feature>
<feature type="binding site" evidence="1">
    <location>
        <position position="207"/>
    </location>
    <ligand>
        <name>NAD(+)</name>
        <dbReference type="ChEBI" id="CHEBI:57540"/>
    </ligand>
</feature>
<feature type="binding site" evidence="1">
    <location>
        <position position="420"/>
    </location>
    <ligand>
        <name>NAD(+)</name>
        <dbReference type="ChEBI" id="CHEBI:57540"/>
    </ligand>
</feature>
<feature type="binding site" evidence="1">
    <location>
        <position position="427"/>
    </location>
    <ligand>
        <name>NAD(+)</name>
        <dbReference type="ChEBI" id="CHEBI:57540"/>
    </ligand>
</feature>
<feature type="binding site" evidence="1">
    <location>
        <position position="694"/>
    </location>
    <ligand>
        <name>(6R)-5,10-methylene-5,6,7,8-tetrahydrofolate</name>
        <dbReference type="ChEBI" id="CHEBI:15636"/>
    </ligand>
</feature>
<feature type="binding site" evidence="1">
    <location>
        <position position="786"/>
    </location>
    <ligand>
        <name>(6R)-5,10-methylene-5,6,7,8-tetrahydrofolate</name>
        <dbReference type="ChEBI" id="CHEBI:15636"/>
    </ligand>
</feature>
<feature type="mutagenesis site" description="Does not affect activity and binding of NAD(+)." evidence="2">
    <original>G</original>
    <variation>A</variation>
    <location>
        <position position="139"/>
    </location>
</feature>
<protein>
    <recommendedName>
        <fullName evidence="8">Sarcosine oxidase subunit alpha</fullName>
        <shortName evidence="8">Sarcosine oxidase subunit A</shortName>
        <ecNumber evidence="3 6 9">1.5.3.24</ecNumber>
    </recommendedName>
    <alternativeName>
        <fullName evidence="8">Sarcosine oxidase (5,10-methylenetetrahydrofolate-forming) subunit alpha</fullName>
    </alternativeName>
    <alternativeName>
        <fullName evidence="8">Tetrameric sarcosine oxidase subunit alpha</fullName>
        <shortName evidence="8">TSOX subunit alpha</shortName>
    </alternativeName>
</protein>
<proteinExistence type="evidence at protein level"/>
<keyword id="KW-0963">Cytoplasm</keyword>
<keyword id="KW-0903">Direct protein sequencing</keyword>
<keyword id="KW-0520">NAD</keyword>
<keyword id="KW-0547">Nucleotide-binding</keyword>
<keyword id="KW-0560">Oxidoreductase</keyword>
<name>TSOXA_CORS1</name>
<gene>
    <name evidence="7" type="primary">soxA</name>
</gene>
<organism>
    <name type="scientific">Corynebacterium sp. (strain P-1)</name>
    <dbReference type="NCBI Taxonomy" id="69006"/>
    <lineage>
        <taxon>Bacteria</taxon>
        <taxon>Bacillati</taxon>
        <taxon>Actinomycetota</taxon>
        <taxon>Actinomycetes</taxon>
        <taxon>Mycobacteriales</taxon>
        <taxon>Corynebacteriaceae</taxon>
        <taxon>Corynebacterium</taxon>
    </lineage>
</organism>
<reference key="1">
    <citation type="journal article" date="1995" name="J. Biol. Chem.">
        <title>Sequence analysis of sarcosine oxidase and nearby genes reveals homologies with key enzymes of folate one-carbon metabolism.</title>
        <authorList>
            <person name="Chlumsky L.J."/>
            <person name="Zhang L."/>
            <person name="Jorns M.S."/>
        </authorList>
    </citation>
    <scope>NUCLEOTIDE SEQUENCE [GENOMIC DNA]</scope>
    <scope>PROTEIN SEQUENCE OF 2-30</scope>
    <scope>SUBUNIT</scope>
    <scope>IDENTIFICATION BY MASS SPECTROMETRY</scope>
    <source>
        <strain>P-1</strain>
    </source>
</reference>
<reference key="2">
    <citation type="journal article" date="1987" name="Biochemistry">
        <title>Interaction of tetrahydrofolate and other folate derivatives with bacterial sarcosine oxidase.</title>
        <authorList>
            <person name="Kvalnes-Krick K."/>
            <person name="Jorns M.S."/>
        </authorList>
    </citation>
    <scope>FUNCTION</scope>
    <scope>CATALYTIC ACTIVITY</scope>
    <source>
        <strain>P-1</strain>
    </source>
</reference>
<reference key="3">
    <citation type="journal article" date="1993" name="Biochemistry">
        <title>Preparation and properties of recombinant corynebacterial sarcosine oxidase: evidence for posttranslational modification during turnover with sarcosine.</title>
        <authorList>
            <person name="Chlumsky L.J."/>
            <person name="Zhang L."/>
            <person name="Ramsey A.J."/>
            <person name="Jorns M.S."/>
        </authorList>
    </citation>
    <scope>FUNCTION</scope>
    <scope>CATALYTIC ACTIVITY</scope>
    <scope>SUBUNIT</scope>
    <scope>SUBCELLULAR LOCATION</scope>
    <source>
        <strain>P-1</strain>
    </source>
</reference>
<reference key="4">
    <citation type="journal article" date="1997" name="Arch. Biochem. Biophys.">
        <title>Folate utilization by monomeric versus heterotetrameric sarcosine oxidases.</title>
        <authorList>
            <person name="Wagner M.A."/>
            <person name="Schuman Jorns M."/>
        </authorList>
    </citation>
    <scope>FUNCTION</scope>
    <scope>CATALYTIC ACTIVITY</scope>
    <source>
        <strain>P-1</strain>
    </source>
</reference>
<reference key="5">
    <citation type="journal article" date="2001" name="Biochemistry">
        <title>Organization of the multiple coenzymes and subunits and role of the covalent flavin link in the complex heterotetrameric sarcosine oxidase.</title>
        <authorList>
            <person name="Eschenbrenner M."/>
            <person name="Chlumsky L.J."/>
            <person name="Khanna P."/>
            <person name="Strasser F."/>
            <person name="Jorns M.S."/>
        </authorList>
    </citation>
    <scope>FUNCTION</scope>
    <scope>CATALYTIC ACTIVITY</scope>
    <scope>COFACTOR</scope>
    <scope>SUBUNIT</scope>
    <scope>MUTAGENESIS OF GLY-139</scope>
    <source>
        <strain>P-1</strain>
    </source>
</reference>
<evidence type="ECO:0000250" key="1">
    <source>
        <dbReference type="UniProtKB" id="Q50LF0"/>
    </source>
</evidence>
<evidence type="ECO:0000269" key="2">
    <source>
    </source>
</evidence>
<evidence type="ECO:0000269" key="3">
    <source>
    </source>
</evidence>
<evidence type="ECO:0000269" key="4">
    <source>
    </source>
</evidence>
<evidence type="ECO:0000269" key="5">
    <source>
    </source>
</evidence>
<evidence type="ECO:0000269" key="6">
    <source>
    </source>
</evidence>
<evidence type="ECO:0000303" key="7">
    <source>
    </source>
</evidence>
<evidence type="ECO:0000305" key="8"/>
<evidence type="ECO:0000305" key="9">
    <source>
    </source>
</evidence>
<accession>Q46337</accession>
<sequence>MSQNTSYRLPAEQSPAARIDRGEALVLTVDGKQLEAFRGDTVASAMLANGQRACGNSMYLDRPRGIFSAGVEEPNALVTVEARHEQDINESMLAATTVPVTANLSATLLRGLGVLDPSTDPAYYDHVHVHTDVLVVGAGPAGLAAAREASRSGARVLLLDERAEAGGSLRDAAGEQIDGQDAAAWIDATVAELAAAEETTHLQRTTVLGSYDANYVVAVQRRTVHLDGPSGAGVSRERIWHIRANQVVLATGAHERPIVFENNDRPGIMLAGAVRSYLNCYGVRAGSQIVVATTNDSAYPLVADLAASGGVVAVIDARTTVSAAAAEAVGAGVRVITGSVVVDTEANESGELSAVIVAELGEDRELGEPQRFEADVLAVAGGFNPVVHLHSQRQGKLVWDTSIHAFVPDAAVANQHLAGALTGLFDTASALSTGAAVGAAAATAAGFERIAQVPQALPVPAGETRPVWLVPSLNGDQATNYTTHFVDLQRDQTVSDVLRATGAGLESVEHIKRYTSISTANDQGKTSGVAAIGVIAAVLGIENPAEIGTTTFRAPYTPVAFAALAGRTRGELLDPARITPMHSWHLAQGAKFEDVGQWKRAWYFPQDGEDMDAAVYRECAAVRESVGMLDATTLGKIEIRGADAAEFLNRIYTNGYTKLKVGMARYGVMCKADGMVFDDGVTLRLAEDRFLMHTTTGGAAGVLDWLEEWLQTEWPELDVTCTSVTEQLATVAVVGPRSRDVVAKLVTGLDVSNDAFKFMSFQDVTLDSGIEARISRISFSGELAYEIAIPSWHGLRVWEDVYAAGQEFNITPYGTETMHVLRAEKGFIIVGQDTDGTVTPQDAGMEWVVSKLKDFVGKRSFSREDNLREDRKHLVSVLPVDTALRLAEGAALVADGAVETEGCTPMEGWVTSSYNSPALGRTFGLALIKNGRSRIGEVLKTPVNGQLVDVLVSDLVLFDPEGSRRDG</sequence>
<dbReference type="EC" id="1.5.3.24" evidence="3 6 9"/>
<dbReference type="EMBL" id="U23955">
    <property type="protein sequence ID" value="AAC43461.1"/>
    <property type="molecule type" value="Genomic_DNA"/>
</dbReference>
<dbReference type="SMR" id="Q46337"/>
<dbReference type="KEGG" id="ag:AAC43461"/>
<dbReference type="BioCyc" id="MetaCyc:MONOMER-8521"/>
<dbReference type="GO" id="GO:0005737">
    <property type="term" value="C:cytoplasm"/>
    <property type="evidence" value="ECO:0007669"/>
    <property type="project" value="UniProtKB-SubCell"/>
</dbReference>
<dbReference type="GO" id="GO:0000166">
    <property type="term" value="F:nucleotide binding"/>
    <property type="evidence" value="ECO:0007669"/>
    <property type="project" value="UniProtKB-KW"/>
</dbReference>
<dbReference type="GO" id="GO:0008115">
    <property type="term" value="F:sarcosine oxidase activity"/>
    <property type="evidence" value="ECO:0007669"/>
    <property type="project" value="UniProtKB-EC"/>
</dbReference>
<dbReference type="GO" id="GO:0046653">
    <property type="term" value="P:tetrahydrofolate metabolic process"/>
    <property type="evidence" value="ECO:0007669"/>
    <property type="project" value="InterPro"/>
</dbReference>
<dbReference type="Gene3D" id="3.10.20.440">
    <property type="entry name" value="2Fe-2S iron-sulphur cluster binding domain, sarcosine oxidase, alpha subunit, N-terminal domain"/>
    <property type="match status" value="1"/>
</dbReference>
<dbReference type="Gene3D" id="3.50.50.60">
    <property type="entry name" value="FAD/NAD(P)-binding domain"/>
    <property type="match status" value="1"/>
</dbReference>
<dbReference type="Gene3D" id="3.30.1360.120">
    <property type="entry name" value="Probable tRNA modification gtpase trme, domain 1"/>
    <property type="match status" value="1"/>
</dbReference>
<dbReference type="InterPro" id="IPR042204">
    <property type="entry name" value="2Fe-2S-bd_N"/>
</dbReference>
<dbReference type="InterPro" id="IPR036188">
    <property type="entry name" value="FAD/NAD-bd_sf"/>
</dbReference>
<dbReference type="InterPro" id="IPR023753">
    <property type="entry name" value="FAD/NAD-binding_dom"/>
</dbReference>
<dbReference type="InterPro" id="IPR013977">
    <property type="entry name" value="GCST_C"/>
</dbReference>
<dbReference type="InterPro" id="IPR006222">
    <property type="entry name" value="GCV_T_N"/>
</dbReference>
<dbReference type="InterPro" id="IPR028896">
    <property type="entry name" value="GcvT/YgfZ/DmdA"/>
</dbReference>
<dbReference type="InterPro" id="IPR029043">
    <property type="entry name" value="GcvT/YgfZ_C"/>
</dbReference>
<dbReference type="InterPro" id="IPR006277">
    <property type="entry name" value="Sarcosine_oxidase_asu"/>
</dbReference>
<dbReference type="InterPro" id="IPR041117">
    <property type="entry name" value="SoxA_A3"/>
</dbReference>
<dbReference type="InterPro" id="IPR027266">
    <property type="entry name" value="TrmE/GcvT_dom1"/>
</dbReference>
<dbReference type="NCBIfam" id="TIGR01372">
    <property type="entry name" value="soxA"/>
    <property type="match status" value="1"/>
</dbReference>
<dbReference type="PANTHER" id="PTHR43757">
    <property type="entry name" value="AMINOMETHYLTRANSFERASE"/>
    <property type="match status" value="1"/>
</dbReference>
<dbReference type="PANTHER" id="PTHR43757:SF2">
    <property type="entry name" value="AMINOMETHYLTRANSFERASE, MITOCHONDRIAL"/>
    <property type="match status" value="1"/>
</dbReference>
<dbReference type="Pfam" id="PF13510">
    <property type="entry name" value="Fer2_4"/>
    <property type="match status" value="1"/>
</dbReference>
<dbReference type="Pfam" id="PF01571">
    <property type="entry name" value="GCV_T"/>
    <property type="match status" value="1"/>
</dbReference>
<dbReference type="Pfam" id="PF08669">
    <property type="entry name" value="GCV_T_C"/>
    <property type="match status" value="1"/>
</dbReference>
<dbReference type="Pfam" id="PF07992">
    <property type="entry name" value="Pyr_redox_2"/>
    <property type="match status" value="1"/>
</dbReference>
<dbReference type="Pfam" id="PF17806">
    <property type="entry name" value="SO_alpha_A3"/>
    <property type="match status" value="1"/>
</dbReference>
<dbReference type="PIRSF" id="PIRSF037980">
    <property type="entry name" value="SoxA"/>
    <property type="match status" value="1"/>
</dbReference>
<dbReference type="PRINTS" id="PR00368">
    <property type="entry name" value="FADPNR"/>
</dbReference>
<dbReference type="PRINTS" id="PR00411">
    <property type="entry name" value="PNDRDTASEI"/>
</dbReference>
<dbReference type="SUPFAM" id="SSF101790">
    <property type="entry name" value="Aminomethyltransferase beta-barrel domain"/>
    <property type="match status" value="1"/>
</dbReference>
<dbReference type="SUPFAM" id="SSF51905">
    <property type="entry name" value="FAD/NAD(P)-binding domain"/>
    <property type="match status" value="1"/>
</dbReference>
<dbReference type="SUPFAM" id="SSF103025">
    <property type="entry name" value="Folate-binding domain"/>
    <property type="match status" value="1"/>
</dbReference>
<comment type="function">
    <text evidence="2 3 5 6">In the presence of tetrahydrofolate, catalyzes the oxidative demethylation of sarcosine to yield glycine, 5,10-methylenetetrahydrofolate and hydrogen peroxide (PubMed:11330998, PubMed:3427080, PubMed:9185627). In the absence of tetrahydrofolate, catalyzes the oxidative demethylation of sarcosine to yield glycine, formaldehyde and hydrogen peroxide (PubMed:11330998, PubMed:7692961, PubMed:9185627).</text>
</comment>
<comment type="catalytic activity">
    <reaction evidence="3 6 9">
        <text>sarcosine + (6S)-5,6,7,8-tetrahydrofolate + O2 = (6R)-5,10-methylene-5,6,7,8-tetrahydrofolate + glycine + H2O2</text>
        <dbReference type="Rhea" id="RHEA:70455"/>
        <dbReference type="ChEBI" id="CHEBI:15379"/>
        <dbReference type="ChEBI" id="CHEBI:15636"/>
        <dbReference type="ChEBI" id="CHEBI:16240"/>
        <dbReference type="ChEBI" id="CHEBI:57305"/>
        <dbReference type="ChEBI" id="CHEBI:57433"/>
        <dbReference type="ChEBI" id="CHEBI:57453"/>
        <dbReference type="EC" id="1.5.3.24"/>
    </reaction>
</comment>
<comment type="catalytic activity">
    <reaction evidence="2 5 6">
        <text>sarcosine + O2 + H2O = formaldehyde + glycine + H2O2</text>
        <dbReference type="Rhea" id="RHEA:13313"/>
        <dbReference type="ChEBI" id="CHEBI:15377"/>
        <dbReference type="ChEBI" id="CHEBI:15379"/>
        <dbReference type="ChEBI" id="CHEBI:16240"/>
        <dbReference type="ChEBI" id="CHEBI:16842"/>
        <dbReference type="ChEBI" id="CHEBI:57305"/>
        <dbReference type="ChEBI" id="CHEBI:57433"/>
    </reaction>
</comment>
<comment type="cofactor">
    <cofactor evidence="2">
        <name>NAD(+)</name>
        <dbReference type="ChEBI" id="CHEBI:57540"/>
    </cofactor>
    <text evidence="2">Binds 1 NAD(+) per subunit.</text>
</comment>
<comment type="subunit">
    <text evidence="2 4 5">Heterotetramer composed of subunits alpha (SoxA), beta (SoxB), gamma (SoxG) and delta (SoxD).</text>
</comment>
<comment type="subcellular location">
    <subcellularLocation>
        <location evidence="5">Cytoplasm</location>
    </subcellularLocation>
</comment>
<comment type="miscellaneous">
    <text evidence="6">Utilization of tetrahydrofolate is probably the physiological reaction since the products are substrates for serine hydroxymethyltransferase, an enzyme which is part of the sarcosine oxidase operon.</text>
</comment>
<comment type="similarity">
    <text evidence="8">Belongs to the GcvT family.</text>
</comment>